<evidence type="ECO:0000250" key="1">
    <source>
        <dbReference type="UniProtKB" id="O28126"/>
    </source>
</evidence>
<evidence type="ECO:0000250" key="2">
    <source>
        <dbReference type="UniProtKB" id="P06961"/>
    </source>
</evidence>
<evidence type="ECO:0000250" key="3">
    <source>
        <dbReference type="UniProtKB" id="Q7SIB1"/>
    </source>
</evidence>
<evidence type="ECO:0000305" key="4"/>
<proteinExistence type="inferred from homology"/>
<gene>
    <name type="primary">cca</name>
</gene>
<reference key="1">
    <citation type="journal article" date="1994" name="Microbiology">
        <title>Serum-sensitive mutation of Francisella novicida: association with an ABC transporter gene.</title>
        <authorList>
            <person name="Mdluli K.E."/>
            <person name="Anthony L.S."/>
            <person name="Baron G.S."/>
            <person name="McDonald M.K."/>
            <person name="Myltseva S.V."/>
            <person name="Nano F.E."/>
        </authorList>
    </citation>
    <scope>NUCLEOTIDE SEQUENCE [GENOMIC DNA]</scope>
    <source>
        <strain>U112</strain>
    </source>
</reference>
<keyword id="KW-0067">ATP-binding</keyword>
<keyword id="KW-0460">Magnesium</keyword>
<keyword id="KW-0479">Metal-binding</keyword>
<keyword id="KW-0547">Nucleotide-binding</keyword>
<keyword id="KW-0548">Nucleotidyltransferase</keyword>
<keyword id="KW-0694">RNA-binding</keyword>
<keyword id="KW-0808">Transferase</keyword>
<keyword id="KW-0819">tRNA processing</keyword>
<protein>
    <recommendedName>
        <fullName>CCA tRNA nucleotidyltransferase</fullName>
        <ecNumber evidence="2">2.7.7.72</ecNumber>
    </recommendedName>
    <alternativeName>
        <fullName>CCA-adding enzyme</fullName>
    </alternativeName>
    <alternativeName>
        <fullName>tRNA CCA-pyrophosphorylase</fullName>
    </alternativeName>
    <alternativeName>
        <fullName>tRNA adenylyltransferase</fullName>
    </alternativeName>
</protein>
<organism>
    <name type="scientific">Francisella novicida</name>
    <dbReference type="NCBI Taxonomy" id="264"/>
    <lineage>
        <taxon>Bacteria</taxon>
        <taxon>Pseudomonadati</taxon>
        <taxon>Pseudomonadota</taxon>
        <taxon>Gammaproteobacteria</taxon>
        <taxon>Thiotrichales</taxon>
        <taxon>Francisellaceae</taxon>
        <taxon>Francisella</taxon>
    </lineage>
</organism>
<name>CCA_FRANO</name>
<comment type="function">
    <text evidence="1 2">Catalyzes the addition and repair of the essential 3'-terminal CCA sequence in tRNAs without using a nucleic acid template. Adds these three nucleotides in the order of C, C, and A to the tRNA nucleotide-73, using CTP and ATP as substrates and producing inorganic pyrophosphate. tRNA 3'-terminal CCA addition is required both for tRNA processing and repair. Also involved in tRNA surveillance by mediating tandem CCA addition to generate a CCACCA at the 3' terminus of unstable tRNAs. While stable tRNAs receive only 3'-terminal CCA, unstable tRNAs are marked with CCACCA and rapidly degraded (By similarity). The structural flexibility of RNA controls the choice between CCA versus CCACCA addition: following the first CCA addition cycle, nucleotide-binding to the active site triggers a clockwise screw motion, producing torque on the RNA. This ejects stable RNAs, whereas unstable RNAs are refolded while bound to the enzyme and subjected to a second CCA catalytic cycle (By similarity).</text>
</comment>
<comment type="catalytic activity">
    <reaction evidence="2">
        <text>a tRNA precursor + 2 CTP + ATP = a tRNA with a 3' CCA end + 3 diphosphate</text>
        <dbReference type="Rhea" id="RHEA:14433"/>
        <dbReference type="Rhea" id="RHEA-COMP:10465"/>
        <dbReference type="Rhea" id="RHEA-COMP:10468"/>
        <dbReference type="ChEBI" id="CHEBI:30616"/>
        <dbReference type="ChEBI" id="CHEBI:33019"/>
        <dbReference type="ChEBI" id="CHEBI:37563"/>
        <dbReference type="ChEBI" id="CHEBI:74896"/>
        <dbReference type="ChEBI" id="CHEBI:83071"/>
        <dbReference type="EC" id="2.7.7.72"/>
    </reaction>
</comment>
<comment type="catalytic activity">
    <reaction evidence="2">
        <text>a tRNA with a 3' CCA end + 2 CTP + ATP = a tRNA with a 3' CCACCA end + 3 diphosphate</text>
        <dbReference type="Rhea" id="RHEA:76235"/>
        <dbReference type="Rhea" id="RHEA-COMP:10468"/>
        <dbReference type="Rhea" id="RHEA-COMP:18655"/>
        <dbReference type="ChEBI" id="CHEBI:30616"/>
        <dbReference type="ChEBI" id="CHEBI:33019"/>
        <dbReference type="ChEBI" id="CHEBI:37563"/>
        <dbReference type="ChEBI" id="CHEBI:83071"/>
        <dbReference type="ChEBI" id="CHEBI:195187"/>
    </reaction>
    <physiologicalReaction direction="left-to-right" evidence="2">
        <dbReference type="Rhea" id="RHEA:76236"/>
    </physiologicalReaction>
</comment>
<comment type="similarity">
    <text evidence="4">Belongs to the tRNA nucleotidyltransferase/poly(A) polymerase family.</text>
</comment>
<feature type="chain" id="PRO_0000139088" description="CCA tRNA nucleotidyltransferase">
    <location>
        <begin position="1"/>
        <end position="84" status="greater than"/>
    </location>
</feature>
<feature type="binding site" evidence="3">
    <location>
        <position position="8"/>
    </location>
    <ligand>
        <name>ATP</name>
        <dbReference type="ChEBI" id="CHEBI:30616"/>
    </ligand>
</feature>
<feature type="binding site" evidence="3">
    <location>
        <position position="8"/>
    </location>
    <ligand>
        <name>CTP</name>
        <dbReference type="ChEBI" id="CHEBI:37563"/>
    </ligand>
</feature>
<feature type="binding site" evidence="3">
    <location>
        <position position="11"/>
    </location>
    <ligand>
        <name>ATP</name>
        <dbReference type="ChEBI" id="CHEBI:30616"/>
    </ligand>
</feature>
<feature type="binding site" evidence="3">
    <location>
        <position position="11"/>
    </location>
    <ligand>
        <name>CTP</name>
        <dbReference type="ChEBI" id="CHEBI:37563"/>
    </ligand>
</feature>
<feature type="binding site" evidence="3">
    <location>
        <position position="21"/>
    </location>
    <ligand>
        <name>Mg(2+)</name>
        <dbReference type="ChEBI" id="CHEBI:18420"/>
    </ligand>
</feature>
<feature type="binding site" evidence="3">
    <location>
        <position position="23"/>
    </location>
    <ligand>
        <name>Mg(2+)</name>
        <dbReference type="ChEBI" id="CHEBI:18420"/>
    </ligand>
</feature>
<feature type="non-terminal residue">
    <location>
        <position position="84"/>
    </location>
</feature>
<sequence>MKFYLVGGAVRDMLLGITPKDKDWVVVGATEDEMLANGFIKIAANFPVFIHPQTKQEYALARSEKKTRNGYHGFEVNFSKYITL</sequence>
<accession>Q47907</accession>
<dbReference type="EC" id="2.7.7.72" evidence="2"/>
<dbReference type="EMBL" id="L17003">
    <property type="protein sequence ID" value="AAD15236.1"/>
    <property type="molecule type" value="Genomic_DNA"/>
</dbReference>
<dbReference type="SMR" id="Q47907"/>
<dbReference type="STRING" id="676032.FN3523_1671"/>
<dbReference type="GO" id="GO:0005524">
    <property type="term" value="F:ATP binding"/>
    <property type="evidence" value="ECO:0007669"/>
    <property type="project" value="UniProtKB-KW"/>
</dbReference>
<dbReference type="GO" id="GO:0004810">
    <property type="term" value="F:CCA tRNA nucleotidyltransferase activity"/>
    <property type="evidence" value="ECO:0007669"/>
    <property type="project" value="UniProtKB-EC"/>
</dbReference>
<dbReference type="GO" id="GO:0046872">
    <property type="term" value="F:metal ion binding"/>
    <property type="evidence" value="ECO:0007669"/>
    <property type="project" value="UniProtKB-KW"/>
</dbReference>
<dbReference type="GO" id="GO:0003723">
    <property type="term" value="F:RNA binding"/>
    <property type="evidence" value="ECO:0007669"/>
    <property type="project" value="UniProtKB-KW"/>
</dbReference>
<dbReference type="GO" id="GO:0008033">
    <property type="term" value="P:tRNA processing"/>
    <property type="evidence" value="ECO:0007669"/>
    <property type="project" value="UniProtKB-KW"/>
</dbReference>
<dbReference type="Gene3D" id="3.30.460.10">
    <property type="entry name" value="Beta Polymerase, domain 2"/>
    <property type="match status" value="1"/>
</dbReference>
<dbReference type="InterPro" id="IPR043519">
    <property type="entry name" value="NT_sf"/>
</dbReference>
<dbReference type="InterPro" id="IPR002646">
    <property type="entry name" value="PolA_pol_head_dom"/>
</dbReference>
<dbReference type="InterPro" id="IPR050124">
    <property type="entry name" value="tRNA_CCA-adding_enzyme"/>
</dbReference>
<dbReference type="PANTHER" id="PTHR47545">
    <property type="entry name" value="MULTIFUNCTIONAL CCA PROTEIN"/>
    <property type="match status" value="1"/>
</dbReference>
<dbReference type="PANTHER" id="PTHR47545:SF1">
    <property type="entry name" value="MULTIFUNCTIONAL CCA PROTEIN"/>
    <property type="match status" value="1"/>
</dbReference>
<dbReference type="Pfam" id="PF01743">
    <property type="entry name" value="PolyA_pol"/>
    <property type="match status" value="1"/>
</dbReference>
<dbReference type="SUPFAM" id="SSF81301">
    <property type="entry name" value="Nucleotidyltransferase"/>
    <property type="match status" value="1"/>
</dbReference>